<keyword id="KW-0413">Isomerase</keyword>
<keyword id="KW-0819">tRNA processing</keyword>
<sequence length="319" mass="35374">MSRRRRFKGRDVHGILLLDKPTGLTSNDVLQKVKRIYNAAKAGHTGALDPLATGMLPICLGEATKFSQYLLEADKRYEVTAKLGERTNTSDSDGEVVSTRPVNVALGTLIESLDQFRGPIMQVPSMYSALKHNGRPLYEYAREGIEIEREARPITVFELKLISFEGDEVKLEVHCSKGTYIRSLVDDLGEVLGCGAHVTQLRRTQVATYPYERMLTLEQLECIFEQAKAESIPPREQLDPLLLPMDTAVAALPEVNMLAAVAAYVNQGQAVQVAGAPQSGQVRMTVGPEREFIGVGEIDDEGRVAPKRLVRYHDEHDEE</sequence>
<dbReference type="EC" id="5.4.99.25" evidence="1"/>
<dbReference type="EMBL" id="CP000644">
    <property type="protein sequence ID" value="ABO89139.1"/>
    <property type="molecule type" value="Genomic_DNA"/>
</dbReference>
<dbReference type="RefSeq" id="WP_005317516.1">
    <property type="nucleotide sequence ID" value="NC_009348.1"/>
</dbReference>
<dbReference type="SMR" id="A4SJR7"/>
<dbReference type="STRING" id="29491.GCA_000820065_01171"/>
<dbReference type="GeneID" id="79878675"/>
<dbReference type="KEGG" id="asa:ASA_1012"/>
<dbReference type="eggNOG" id="COG0130">
    <property type="taxonomic scope" value="Bacteria"/>
</dbReference>
<dbReference type="HOGENOM" id="CLU_032087_0_3_6"/>
<dbReference type="Proteomes" id="UP000000225">
    <property type="component" value="Chromosome"/>
</dbReference>
<dbReference type="GO" id="GO:0003723">
    <property type="term" value="F:RNA binding"/>
    <property type="evidence" value="ECO:0007669"/>
    <property type="project" value="InterPro"/>
</dbReference>
<dbReference type="GO" id="GO:0160148">
    <property type="term" value="F:tRNA pseudouridine(55) synthase activity"/>
    <property type="evidence" value="ECO:0007669"/>
    <property type="project" value="UniProtKB-EC"/>
</dbReference>
<dbReference type="GO" id="GO:1990481">
    <property type="term" value="P:mRNA pseudouridine synthesis"/>
    <property type="evidence" value="ECO:0007669"/>
    <property type="project" value="TreeGrafter"/>
</dbReference>
<dbReference type="GO" id="GO:0031119">
    <property type="term" value="P:tRNA pseudouridine synthesis"/>
    <property type="evidence" value="ECO:0007669"/>
    <property type="project" value="UniProtKB-UniRule"/>
</dbReference>
<dbReference type="CDD" id="cd02573">
    <property type="entry name" value="PseudoU_synth_EcTruB"/>
    <property type="match status" value="1"/>
</dbReference>
<dbReference type="CDD" id="cd21152">
    <property type="entry name" value="PUA_TruB_bacterial"/>
    <property type="match status" value="1"/>
</dbReference>
<dbReference type="FunFam" id="2.30.130.10:FF:000004">
    <property type="entry name" value="tRNA pseudouridine synthase B"/>
    <property type="match status" value="1"/>
</dbReference>
<dbReference type="FunFam" id="3.30.2350.10:FF:000003">
    <property type="entry name" value="tRNA pseudouridine synthase B"/>
    <property type="match status" value="1"/>
</dbReference>
<dbReference type="Gene3D" id="3.30.2350.10">
    <property type="entry name" value="Pseudouridine synthase"/>
    <property type="match status" value="1"/>
</dbReference>
<dbReference type="Gene3D" id="2.30.130.10">
    <property type="entry name" value="PUA domain"/>
    <property type="match status" value="1"/>
</dbReference>
<dbReference type="HAMAP" id="MF_01080">
    <property type="entry name" value="TruB_bact"/>
    <property type="match status" value="1"/>
</dbReference>
<dbReference type="InterPro" id="IPR020103">
    <property type="entry name" value="PsdUridine_synth_cat_dom_sf"/>
</dbReference>
<dbReference type="InterPro" id="IPR002501">
    <property type="entry name" value="PsdUridine_synth_N"/>
</dbReference>
<dbReference type="InterPro" id="IPR015947">
    <property type="entry name" value="PUA-like_sf"/>
</dbReference>
<dbReference type="InterPro" id="IPR036974">
    <property type="entry name" value="PUA_sf"/>
</dbReference>
<dbReference type="InterPro" id="IPR014780">
    <property type="entry name" value="tRNA_psdUridine_synth_TruB"/>
</dbReference>
<dbReference type="InterPro" id="IPR015240">
    <property type="entry name" value="tRNA_sdUridine_synth_fam1_C"/>
</dbReference>
<dbReference type="InterPro" id="IPR032819">
    <property type="entry name" value="TruB_C"/>
</dbReference>
<dbReference type="NCBIfam" id="TIGR00431">
    <property type="entry name" value="TruB"/>
    <property type="match status" value="1"/>
</dbReference>
<dbReference type="PANTHER" id="PTHR13767:SF2">
    <property type="entry name" value="PSEUDOURIDYLATE SYNTHASE TRUB1"/>
    <property type="match status" value="1"/>
</dbReference>
<dbReference type="PANTHER" id="PTHR13767">
    <property type="entry name" value="TRNA-PSEUDOURIDINE SYNTHASE"/>
    <property type="match status" value="1"/>
</dbReference>
<dbReference type="Pfam" id="PF09157">
    <property type="entry name" value="TruB-C_2"/>
    <property type="match status" value="1"/>
</dbReference>
<dbReference type="Pfam" id="PF16198">
    <property type="entry name" value="TruB_C_2"/>
    <property type="match status" value="1"/>
</dbReference>
<dbReference type="Pfam" id="PF01509">
    <property type="entry name" value="TruB_N"/>
    <property type="match status" value="1"/>
</dbReference>
<dbReference type="SUPFAM" id="SSF55120">
    <property type="entry name" value="Pseudouridine synthase"/>
    <property type="match status" value="1"/>
</dbReference>
<dbReference type="SUPFAM" id="SSF88697">
    <property type="entry name" value="PUA domain-like"/>
    <property type="match status" value="1"/>
</dbReference>
<reference key="1">
    <citation type="journal article" date="2008" name="BMC Genomics">
        <title>The genome of Aeromonas salmonicida subsp. salmonicida A449: insights into the evolution of a fish pathogen.</title>
        <authorList>
            <person name="Reith M.E."/>
            <person name="Singh R.K."/>
            <person name="Curtis B."/>
            <person name="Boyd J.M."/>
            <person name="Bouevitch A."/>
            <person name="Kimball J."/>
            <person name="Munholland J."/>
            <person name="Murphy C."/>
            <person name="Sarty D."/>
            <person name="Williams J."/>
            <person name="Nash J.H."/>
            <person name="Johnson S.C."/>
            <person name="Brown L.L."/>
        </authorList>
    </citation>
    <scope>NUCLEOTIDE SEQUENCE [LARGE SCALE GENOMIC DNA]</scope>
    <source>
        <strain>A449</strain>
    </source>
</reference>
<gene>
    <name evidence="1" type="primary">truB</name>
    <name type="ordered locus">ASA_1012</name>
</gene>
<protein>
    <recommendedName>
        <fullName evidence="1">tRNA pseudouridine synthase B</fullName>
        <ecNumber evidence="1">5.4.99.25</ecNumber>
    </recommendedName>
    <alternativeName>
        <fullName evidence="1">tRNA pseudouridine(55) synthase</fullName>
        <shortName evidence="1">Psi55 synthase</shortName>
    </alternativeName>
    <alternativeName>
        <fullName evidence="1">tRNA pseudouridylate synthase</fullName>
    </alternativeName>
    <alternativeName>
        <fullName evidence="1">tRNA-uridine isomerase</fullName>
    </alternativeName>
</protein>
<accession>A4SJR7</accession>
<organism>
    <name type="scientific">Aeromonas salmonicida (strain A449)</name>
    <dbReference type="NCBI Taxonomy" id="382245"/>
    <lineage>
        <taxon>Bacteria</taxon>
        <taxon>Pseudomonadati</taxon>
        <taxon>Pseudomonadota</taxon>
        <taxon>Gammaproteobacteria</taxon>
        <taxon>Aeromonadales</taxon>
        <taxon>Aeromonadaceae</taxon>
        <taxon>Aeromonas</taxon>
    </lineage>
</organism>
<feature type="chain" id="PRO_1000149815" description="tRNA pseudouridine synthase B">
    <location>
        <begin position="1"/>
        <end position="319"/>
    </location>
</feature>
<feature type="active site" description="Nucleophile" evidence="1">
    <location>
        <position position="49"/>
    </location>
</feature>
<proteinExistence type="inferred from homology"/>
<evidence type="ECO:0000255" key="1">
    <source>
        <dbReference type="HAMAP-Rule" id="MF_01080"/>
    </source>
</evidence>
<name>TRUB_AERS4</name>
<comment type="function">
    <text evidence="1">Responsible for synthesis of pseudouridine from uracil-55 in the psi GC loop of transfer RNAs.</text>
</comment>
<comment type="catalytic activity">
    <reaction evidence="1">
        <text>uridine(55) in tRNA = pseudouridine(55) in tRNA</text>
        <dbReference type="Rhea" id="RHEA:42532"/>
        <dbReference type="Rhea" id="RHEA-COMP:10101"/>
        <dbReference type="Rhea" id="RHEA-COMP:10102"/>
        <dbReference type="ChEBI" id="CHEBI:65314"/>
        <dbReference type="ChEBI" id="CHEBI:65315"/>
        <dbReference type="EC" id="5.4.99.25"/>
    </reaction>
</comment>
<comment type="similarity">
    <text evidence="1">Belongs to the pseudouridine synthase TruB family. Type 1 subfamily.</text>
</comment>